<organism>
    <name type="scientific">Proteus mirabilis</name>
    <dbReference type="NCBI Taxonomy" id="584"/>
    <lineage>
        <taxon>Bacteria</taxon>
        <taxon>Pseudomonadati</taxon>
        <taxon>Pseudomonadota</taxon>
        <taxon>Gammaproteobacteria</taxon>
        <taxon>Enterobacterales</taxon>
        <taxon>Morganellaceae</taxon>
        <taxon>Proteus</taxon>
    </lineage>
</organism>
<protein>
    <recommendedName>
        <fullName evidence="1 3">Flagellar basal body rod protein FlgB</fullName>
    </recommendedName>
</protein>
<sequence>MLDKLQNTFHFQQEALSLRNKRQEILAANIANADTPGFQARDIDFAAELKKTMENGRTGSHGLQLTMTSERHIPIKPGYRLEADLLYRVPHQTSMDGNTVDMDMERSNLYVPDNSVKYLADVTFINSQVKSMMAVLQQG</sequence>
<evidence type="ECO:0000250" key="1">
    <source>
        <dbReference type="UniProtKB" id="P16437"/>
    </source>
</evidence>
<evidence type="ECO:0000255" key="2"/>
<evidence type="ECO:0000312" key="3">
    <source>
        <dbReference type="EMBL" id="AAC45657.1"/>
    </source>
</evidence>
<accession>P96972</accession>
<name>FLGB_PROMI</name>
<comment type="function">
    <text evidence="1">Structural component of flagellum, the bacterial motility apparatus. Part of the rod structure of flagellar basal body (By similarity).</text>
</comment>
<comment type="subunit">
    <text evidence="1">The basal body constitutes a major portion of the flagellar organelle and consists of a number of rings mounted on a central rod. In Gram-negative bacteria, at least four rings, L, P, S and M are present, whereas Gram-positive bacteria lack the L and P rings. The rod consists of about 26 subunits of FlgG in the distal portion, and FlgB, FlgC and FlgF build up the proximal portion of the rod with about 6 subunits each. Rod assembly occurs by export via the flagellum-specific pathway of its constituent proteins and by their incorporation into the rod structure in the probable order of FlgB, FlgC, FlgF and FlgG. Another protein, FliE, also assembles onto the stable rod structure (By similarity).</text>
</comment>
<comment type="subcellular location">
    <subcellularLocation>
        <location evidence="1">Bacterial flagellum basal body</location>
    </subcellularLocation>
</comment>
<comment type="similarity">
    <text evidence="2">Belongs to the flagella basal body rod proteins family.</text>
</comment>
<feature type="chain" id="PRO_0000415703" description="Flagellar basal body rod protein FlgB">
    <location>
        <begin position="1"/>
        <end position="139"/>
    </location>
</feature>
<proteinExistence type="inferred from homology"/>
<reference evidence="3" key="1">
    <citation type="journal article" date="1997" name="Mol. Microbiol.">
        <title>A motile but non-swarming mutant of Proteus mirabilis lacks FlgN, a facilitator of flagella filament assembly.</title>
        <authorList>
            <person name="Gygi D."/>
            <person name="Fraser G."/>
            <person name="Dufour A."/>
            <person name="Hughes C."/>
        </authorList>
    </citation>
    <scope>NUCLEOTIDE SEQUENCE [GENOMIC DNA]</scope>
    <source>
        <strain evidence="3">U6540</strain>
    </source>
</reference>
<keyword id="KW-0975">Bacterial flagellum</keyword>
<gene>
    <name evidence="3" type="primary">flgB</name>
</gene>
<dbReference type="EMBL" id="U82214">
    <property type="protein sequence ID" value="AAC45657.1"/>
    <property type="molecule type" value="Genomic_DNA"/>
</dbReference>
<dbReference type="SMR" id="P96972"/>
<dbReference type="STRING" id="584.AOUC001_07300"/>
<dbReference type="GO" id="GO:0030694">
    <property type="term" value="C:bacterial-type flagellum basal body, rod"/>
    <property type="evidence" value="ECO:0007669"/>
    <property type="project" value="InterPro"/>
</dbReference>
<dbReference type="GO" id="GO:0071973">
    <property type="term" value="P:bacterial-type flagellum-dependent cell motility"/>
    <property type="evidence" value="ECO:0007669"/>
    <property type="project" value="InterPro"/>
</dbReference>
<dbReference type="InterPro" id="IPR001444">
    <property type="entry name" value="Flag_bb_rod_N"/>
</dbReference>
<dbReference type="InterPro" id="IPR019776">
    <property type="entry name" value="Flagellar_basal_body_rod_CS"/>
</dbReference>
<dbReference type="InterPro" id="IPR006300">
    <property type="entry name" value="FlgB"/>
</dbReference>
<dbReference type="NCBIfam" id="TIGR01396">
    <property type="entry name" value="FlgB"/>
    <property type="match status" value="1"/>
</dbReference>
<dbReference type="PANTHER" id="PTHR30435:SF12">
    <property type="entry name" value="FLAGELLAR BASAL BODY ROD PROTEIN FLGB"/>
    <property type="match status" value="1"/>
</dbReference>
<dbReference type="PANTHER" id="PTHR30435">
    <property type="entry name" value="FLAGELLAR PROTEIN"/>
    <property type="match status" value="1"/>
</dbReference>
<dbReference type="Pfam" id="PF00460">
    <property type="entry name" value="Flg_bb_rod"/>
    <property type="match status" value="1"/>
</dbReference>
<dbReference type="PIRSF" id="PIRSF002889">
    <property type="entry name" value="Rod_FlgB"/>
    <property type="match status" value="1"/>
</dbReference>
<dbReference type="PROSITE" id="PS00588">
    <property type="entry name" value="FLAGELLA_BB_ROD"/>
    <property type="match status" value="1"/>
</dbReference>